<feature type="chain" id="PRO_1000059624" description="Chaperone protein DnaK">
    <location>
        <begin position="1"/>
        <end position="619"/>
    </location>
</feature>
<feature type="region of interest" description="Disordered" evidence="2">
    <location>
        <begin position="579"/>
        <end position="619"/>
    </location>
</feature>
<feature type="compositionally biased region" description="Low complexity" evidence="2">
    <location>
        <begin position="579"/>
        <end position="596"/>
    </location>
</feature>
<feature type="compositionally biased region" description="Acidic residues" evidence="2">
    <location>
        <begin position="608"/>
        <end position="619"/>
    </location>
</feature>
<feature type="modified residue" description="Phosphothreonine; by autocatalysis" evidence="1">
    <location>
        <position position="176"/>
    </location>
</feature>
<sequence>MASNKIIGIDLGTTNSAVAVMDGDKPKIITNPEGARTTPSVVAFKNGETQVGEVAKRQAITNPDTIASIKRHIGEAGYKVTVDGKSYTPQEVSAMILSYIKKFAEDYLGEEVDKAVITVPAYFDDSQRQATKDAGKIAGLDVKRIINEPTASSLAYGLDQNGKDEKILVYDLGGGTFDVSVLELGDGVFQVLSTNGDTHLGGDDFDQKIIDWLVDEFKKDNGVDLSQDKMALQRLKDAAEKAKKDLSGVSEAQISLPFISAGEAGPLHLEKTLTRAQFDQLTADLVERTKAPVENALKDAGLSASEIDEVILNGGSTRIPAVQEAVKNWTGKEPNHSINPDEAVALGAAVQGGVLTGDVKDVVLLDVTPLSLGIETMGGVFTKLIDRNTTIPTSKSQVFSTAADNQPAVDIHVLQGERPMAADNKTLGRFQLTDIPAAPRGIPQIEVKFDIDKNGIVNVSATDKGTGKEQKITIKSSSGLSDEEIDRMMKEAKENEEADKKRKEEVDLRNEVDQLIFTTDKTLKDLEGKVSEDEIKKAKDAKEALEKAQKDNNLDEMKAKKDDLSKIVQDLSVKLYQQAQEAQGQAADGAQANAGDAKTDDDNTVNGDFEEVDPDKDNK</sequence>
<proteinExistence type="inferred from homology"/>
<name>DNAK_PEDPA</name>
<organism>
    <name type="scientific">Pediococcus pentosaceus (strain ATCC 25745 / CCUG 21536 / LMG 10740 / 183-1w)</name>
    <dbReference type="NCBI Taxonomy" id="278197"/>
    <lineage>
        <taxon>Bacteria</taxon>
        <taxon>Bacillati</taxon>
        <taxon>Bacillota</taxon>
        <taxon>Bacilli</taxon>
        <taxon>Lactobacillales</taxon>
        <taxon>Lactobacillaceae</taxon>
        <taxon>Pediococcus</taxon>
    </lineage>
</organism>
<reference key="1">
    <citation type="journal article" date="2006" name="Proc. Natl. Acad. Sci. U.S.A.">
        <title>Comparative genomics of the lactic acid bacteria.</title>
        <authorList>
            <person name="Makarova K.S."/>
            <person name="Slesarev A."/>
            <person name="Wolf Y.I."/>
            <person name="Sorokin A."/>
            <person name="Mirkin B."/>
            <person name="Koonin E.V."/>
            <person name="Pavlov A."/>
            <person name="Pavlova N."/>
            <person name="Karamychev V."/>
            <person name="Polouchine N."/>
            <person name="Shakhova V."/>
            <person name="Grigoriev I."/>
            <person name="Lou Y."/>
            <person name="Rohksar D."/>
            <person name="Lucas S."/>
            <person name="Huang K."/>
            <person name="Goodstein D.M."/>
            <person name="Hawkins T."/>
            <person name="Plengvidhya V."/>
            <person name="Welker D."/>
            <person name="Hughes J."/>
            <person name="Goh Y."/>
            <person name="Benson A."/>
            <person name="Baldwin K."/>
            <person name="Lee J.-H."/>
            <person name="Diaz-Muniz I."/>
            <person name="Dosti B."/>
            <person name="Smeianov V."/>
            <person name="Wechter W."/>
            <person name="Barabote R."/>
            <person name="Lorca G."/>
            <person name="Altermann E."/>
            <person name="Barrangou R."/>
            <person name="Ganesan B."/>
            <person name="Xie Y."/>
            <person name="Rawsthorne H."/>
            <person name="Tamir D."/>
            <person name="Parker C."/>
            <person name="Breidt F."/>
            <person name="Broadbent J.R."/>
            <person name="Hutkins R."/>
            <person name="O'Sullivan D."/>
            <person name="Steele J."/>
            <person name="Unlu G."/>
            <person name="Saier M.H. Jr."/>
            <person name="Klaenhammer T."/>
            <person name="Richardson P."/>
            <person name="Kozyavkin S."/>
            <person name="Weimer B.C."/>
            <person name="Mills D.A."/>
        </authorList>
    </citation>
    <scope>NUCLEOTIDE SEQUENCE [LARGE SCALE GENOMIC DNA]</scope>
    <source>
        <strain>ATCC 25745 / CCUG 21536 / LMG 10740 / 183-1w</strain>
    </source>
</reference>
<evidence type="ECO:0000255" key="1">
    <source>
        <dbReference type="HAMAP-Rule" id="MF_00332"/>
    </source>
</evidence>
<evidence type="ECO:0000256" key="2">
    <source>
        <dbReference type="SAM" id="MobiDB-lite"/>
    </source>
</evidence>
<gene>
    <name evidence="1" type="primary">dnaK</name>
    <name type="ordered locus">PEPE_0896</name>
</gene>
<dbReference type="EMBL" id="CP000422">
    <property type="protein sequence ID" value="ABJ67955.1"/>
    <property type="molecule type" value="Genomic_DNA"/>
</dbReference>
<dbReference type="RefSeq" id="WP_011673326.1">
    <property type="nucleotide sequence ID" value="NC_008525.1"/>
</dbReference>
<dbReference type="SMR" id="Q03FR7"/>
<dbReference type="STRING" id="278197.PEPE_0896"/>
<dbReference type="GeneID" id="33061999"/>
<dbReference type="KEGG" id="ppe:PEPE_0896"/>
<dbReference type="eggNOG" id="COG0443">
    <property type="taxonomic scope" value="Bacteria"/>
</dbReference>
<dbReference type="HOGENOM" id="CLU_005965_2_4_9"/>
<dbReference type="OrthoDB" id="9766019at2"/>
<dbReference type="Proteomes" id="UP000000773">
    <property type="component" value="Chromosome"/>
</dbReference>
<dbReference type="GO" id="GO:0005524">
    <property type="term" value="F:ATP binding"/>
    <property type="evidence" value="ECO:0007669"/>
    <property type="project" value="UniProtKB-UniRule"/>
</dbReference>
<dbReference type="GO" id="GO:0140662">
    <property type="term" value="F:ATP-dependent protein folding chaperone"/>
    <property type="evidence" value="ECO:0007669"/>
    <property type="project" value="InterPro"/>
</dbReference>
<dbReference type="GO" id="GO:0051082">
    <property type="term" value="F:unfolded protein binding"/>
    <property type="evidence" value="ECO:0007669"/>
    <property type="project" value="InterPro"/>
</dbReference>
<dbReference type="CDD" id="cd10234">
    <property type="entry name" value="ASKHA_NBD_HSP70_DnaK-like"/>
    <property type="match status" value="1"/>
</dbReference>
<dbReference type="FunFam" id="2.60.34.10:FF:000014">
    <property type="entry name" value="Chaperone protein DnaK HSP70"/>
    <property type="match status" value="1"/>
</dbReference>
<dbReference type="FunFam" id="1.20.1270.10:FF:000001">
    <property type="entry name" value="Molecular chaperone DnaK"/>
    <property type="match status" value="1"/>
</dbReference>
<dbReference type="FunFam" id="3.30.420.40:FF:000071">
    <property type="entry name" value="Molecular chaperone DnaK"/>
    <property type="match status" value="1"/>
</dbReference>
<dbReference type="FunFam" id="3.90.640.10:FF:000003">
    <property type="entry name" value="Molecular chaperone DnaK"/>
    <property type="match status" value="1"/>
</dbReference>
<dbReference type="Gene3D" id="1.20.1270.10">
    <property type="match status" value="1"/>
</dbReference>
<dbReference type="Gene3D" id="3.30.420.40">
    <property type="match status" value="2"/>
</dbReference>
<dbReference type="Gene3D" id="3.90.640.10">
    <property type="entry name" value="Actin, Chain A, domain 4"/>
    <property type="match status" value="1"/>
</dbReference>
<dbReference type="Gene3D" id="2.60.34.10">
    <property type="entry name" value="Substrate Binding Domain Of DNAk, Chain A, domain 1"/>
    <property type="match status" value="1"/>
</dbReference>
<dbReference type="HAMAP" id="MF_00332">
    <property type="entry name" value="DnaK"/>
    <property type="match status" value="1"/>
</dbReference>
<dbReference type="InterPro" id="IPR043129">
    <property type="entry name" value="ATPase_NBD"/>
</dbReference>
<dbReference type="InterPro" id="IPR012725">
    <property type="entry name" value="Chaperone_DnaK"/>
</dbReference>
<dbReference type="InterPro" id="IPR018181">
    <property type="entry name" value="Heat_shock_70_CS"/>
</dbReference>
<dbReference type="InterPro" id="IPR029048">
    <property type="entry name" value="HSP70_C_sf"/>
</dbReference>
<dbReference type="InterPro" id="IPR029047">
    <property type="entry name" value="HSP70_peptide-bd_sf"/>
</dbReference>
<dbReference type="InterPro" id="IPR013126">
    <property type="entry name" value="Hsp_70_fam"/>
</dbReference>
<dbReference type="NCBIfam" id="NF001413">
    <property type="entry name" value="PRK00290.1"/>
    <property type="match status" value="1"/>
</dbReference>
<dbReference type="NCBIfam" id="TIGR02350">
    <property type="entry name" value="prok_dnaK"/>
    <property type="match status" value="1"/>
</dbReference>
<dbReference type="PANTHER" id="PTHR19375">
    <property type="entry name" value="HEAT SHOCK PROTEIN 70KDA"/>
    <property type="match status" value="1"/>
</dbReference>
<dbReference type="Pfam" id="PF00012">
    <property type="entry name" value="HSP70"/>
    <property type="match status" value="1"/>
</dbReference>
<dbReference type="PRINTS" id="PR00301">
    <property type="entry name" value="HEATSHOCK70"/>
</dbReference>
<dbReference type="SUPFAM" id="SSF53067">
    <property type="entry name" value="Actin-like ATPase domain"/>
    <property type="match status" value="2"/>
</dbReference>
<dbReference type="SUPFAM" id="SSF100934">
    <property type="entry name" value="Heat shock protein 70kD (HSP70), C-terminal subdomain"/>
    <property type="match status" value="1"/>
</dbReference>
<dbReference type="SUPFAM" id="SSF100920">
    <property type="entry name" value="Heat shock protein 70kD (HSP70), peptide-binding domain"/>
    <property type="match status" value="1"/>
</dbReference>
<dbReference type="PROSITE" id="PS00297">
    <property type="entry name" value="HSP70_1"/>
    <property type="match status" value="1"/>
</dbReference>
<dbReference type="PROSITE" id="PS00329">
    <property type="entry name" value="HSP70_2"/>
    <property type="match status" value="1"/>
</dbReference>
<dbReference type="PROSITE" id="PS01036">
    <property type="entry name" value="HSP70_3"/>
    <property type="match status" value="1"/>
</dbReference>
<accession>Q03FR7</accession>
<comment type="function">
    <text evidence="1">Acts as a chaperone.</text>
</comment>
<comment type="induction">
    <text evidence="1">By stress conditions e.g. heat shock.</text>
</comment>
<comment type="similarity">
    <text evidence="1">Belongs to the heat shock protein 70 family.</text>
</comment>
<keyword id="KW-0067">ATP-binding</keyword>
<keyword id="KW-0143">Chaperone</keyword>
<keyword id="KW-0547">Nucleotide-binding</keyword>
<keyword id="KW-0597">Phosphoprotein</keyword>
<keyword id="KW-0346">Stress response</keyword>
<protein>
    <recommendedName>
        <fullName evidence="1">Chaperone protein DnaK</fullName>
    </recommendedName>
    <alternativeName>
        <fullName evidence="1">HSP70</fullName>
    </alternativeName>
    <alternativeName>
        <fullName evidence="1">Heat shock 70 kDa protein</fullName>
    </alternativeName>
    <alternativeName>
        <fullName evidence="1">Heat shock protein 70</fullName>
    </alternativeName>
</protein>